<name>COAA_SALEP</name>
<reference key="1">
    <citation type="journal article" date="2008" name="Genome Res.">
        <title>Comparative genome analysis of Salmonella enteritidis PT4 and Salmonella gallinarum 287/91 provides insights into evolutionary and host adaptation pathways.</title>
        <authorList>
            <person name="Thomson N.R."/>
            <person name="Clayton D.J."/>
            <person name="Windhorst D."/>
            <person name="Vernikos G."/>
            <person name="Davidson S."/>
            <person name="Churcher C."/>
            <person name="Quail M.A."/>
            <person name="Stevens M."/>
            <person name="Jones M.A."/>
            <person name="Watson M."/>
            <person name="Barron A."/>
            <person name="Layton A."/>
            <person name="Pickard D."/>
            <person name="Kingsley R.A."/>
            <person name="Bignell A."/>
            <person name="Clark L."/>
            <person name="Harris B."/>
            <person name="Ormond D."/>
            <person name="Abdellah Z."/>
            <person name="Brooks K."/>
            <person name="Cherevach I."/>
            <person name="Chillingworth T."/>
            <person name="Woodward J."/>
            <person name="Norberczak H."/>
            <person name="Lord A."/>
            <person name="Arrowsmith C."/>
            <person name="Jagels K."/>
            <person name="Moule S."/>
            <person name="Mungall K."/>
            <person name="Saunders M."/>
            <person name="Whitehead S."/>
            <person name="Chabalgoity J.A."/>
            <person name="Maskell D."/>
            <person name="Humphreys T."/>
            <person name="Roberts M."/>
            <person name="Barrow P.A."/>
            <person name="Dougan G."/>
            <person name="Parkhill J."/>
        </authorList>
    </citation>
    <scope>NUCLEOTIDE SEQUENCE [LARGE SCALE GENOMIC DNA]</scope>
    <source>
        <strain>P125109</strain>
    </source>
</reference>
<comment type="catalytic activity">
    <reaction evidence="1">
        <text>(R)-pantothenate + ATP = (R)-4'-phosphopantothenate + ADP + H(+)</text>
        <dbReference type="Rhea" id="RHEA:16373"/>
        <dbReference type="ChEBI" id="CHEBI:10986"/>
        <dbReference type="ChEBI" id="CHEBI:15378"/>
        <dbReference type="ChEBI" id="CHEBI:29032"/>
        <dbReference type="ChEBI" id="CHEBI:30616"/>
        <dbReference type="ChEBI" id="CHEBI:456216"/>
        <dbReference type="EC" id="2.7.1.33"/>
    </reaction>
</comment>
<comment type="pathway">
    <text evidence="1">Cofactor biosynthesis; coenzyme A biosynthesis; CoA from (R)-pantothenate: step 1/5.</text>
</comment>
<comment type="subcellular location">
    <subcellularLocation>
        <location evidence="1">Cytoplasm</location>
    </subcellularLocation>
</comment>
<comment type="similarity">
    <text evidence="1">Belongs to the prokaryotic pantothenate kinase family.</text>
</comment>
<dbReference type="EC" id="2.7.1.33" evidence="1"/>
<dbReference type="EMBL" id="AM933172">
    <property type="protein sequence ID" value="CAR35500.1"/>
    <property type="molecule type" value="Genomic_DNA"/>
</dbReference>
<dbReference type="RefSeq" id="WP_000023069.1">
    <property type="nucleotide sequence ID" value="NC_011294.1"/>
</dbReference>
<dbReference type="SMR" id="B5QXR5"/>
<dbReference type="KEGG" id="set:SEN3928"/>
<dbReference type="HOGENOM" id="CLU_053818_1_1_6"/>
<dbReference type="UniPathway" id="UPA00241">
    <property type="reaction ID" value="UER00352"/>
</dbReference>
<dbReference type="Proteomes" id="UP000000613">
    <property type="component" value="Chromosome"/>
</dbReference>
<dbReference type="GO" id="GO:0005737">
    <property type="term" value="C:cytoplasm"/>
    <property type="evidence" value="ECO:0007669"/>
    <property type="project" value="UniProtKB-SubCell"/>
</dbReference>
<dbReference type="GO" id="GO:0005524">
    <property type="term" value="F:ATP binding"/>
    <property type="evidence" value="ECO:0007669"/>
    <property type="project" value="UniProtKB-UniRule"/>
</dbReference>
<dbReference type="GO" id="GO:0004594">
    <property type="term" value="F:pantothenate kinase activity"/>
    <property type="evidence" value="ECO:0007669"/>
    <property type="project" value="UniProtKB-UniRule"/>
</dbReference>
<dbReference type="GO" id="GO:0015937">
    <property type="term" value="P:coenzyme A biosynthetic process"/>
    <property type="evidence" value="ECO:0007669"/>
    <property type="project" value="UniProtKB-UniRule"/>
</dbReference>
<dbReference type="CDD" id="cd02025">
    <property type="entry name" value="PanK"/>
    <property type="match status" value="1"/>
</dbReference>
<dbReference type="FunFam" id="3.40.50.300:FF:000242">
    <property type="entry name" value="Pantothenate kinase"/>
    <property type="match status" value="1"/>
</dbReference>
<dbReference type="Gene3D" id="3.40.50.300">
    <property type="entry name" value="P-loop containing nucleotide triphosphate hydrolases"/>
    <property type="match status" value="1"/>
</dbReference>
<dbReference type="HAMAP" id="MF_00215">
    <property type="entry name" value="Pantothen_kinase_1"/>
    <property type="match status" value="1"/>
</dbReference>
<dbReference type="InterPro" id="IPR027417">
    <property type="entry name" value="P-loop_NTPase"/>
</dbReference>
<dbReference type="InterPro" id="IPR004566">
    <property type="entry name" value="PanK"/>
</dbReference>
<dbReference type="InterPro" id="IPR006083">
    <property type="entry name" value="PRK/URK"/>
</dbReference>
<dbReference type="NCBIfam" id="TIGR00554">
    <property type="entry name" value="panK_bact"/>
    <property type="match status" value="1"/>
</dbReference>
<dbReference type="PANTHER" id="PTHR10285">
    <property type="entry name" value="URIDINE KINASE"/>
    <property type="match status" value="1"/>
</dbReference>
<dbReference type="Pfam" id="PF00485">
    <property type="entry name" value="PRK"/>
    <property type="match status" value="1"/>
</dbReference>
<dbReference type="PIRSF" id="PIRSF000545">
    <property type="entry name" value="Pantothenate_kin"/>
    <property type="match status" value="1"/>
</dbReference>
<dbReference type="SUPFAM" id="SSF52540">
    <property type="entry name" value="P-loop containing nucleoside triphosphate hydrolases"/>
    <property type="match status" value="1"/>
</dbReference>
<gene>
    <name evidence="1" type="primary">coaA</name>
    <name type="ordered locus">SEN3928</name>
</gene>
<sequence length="316" mass="36236">MSIKEQSLMTPYLQFDRSQWAALRDSVPMTLTEDEIAQLKGINEDLSLEEVAEIYLPLSRLLNFYISSNLRRQAVLEQFLGTNGQRIPYIISIAGSVAVGKSTTARVLQALLSRWPEHRRVELITTDGFLHPNQVLKERGLMKKKGFPESYDMHRLVKFVSDLKSGVPNVTAPVYSHLIYDVIPEGDKTVAQPDILILEGLNVLQSGMDYPHDPHHVFVSDFVDFSIYVDAPEELLQTWYINRFLKFREGAFTDPDSYFHNYAKLSKEEAVNTATSLWKEINWLNLKQNILPTRERASLIMTKSANHAVEQVRLRK</sequence>
<keyword id="KW-0067">ATP-binding</keyword>
<keyword id="KW-0173">Coenzyme A biosynthesis</keyword>
<keyword id="KW-0963">Cytoplasm</keyword>
<keyword id="KW-0418">Kinase</keyword>
<keyword id="KW-0547">Nucleotide-binding</keyword>
<keyword id="KW-0808">Transferase</keyword>
<proteinExistence type="inferred from homology"/>
<organism>
    <name type="scientific">Salmonella enteritidis PT4 (strain P125109)</name>
    <dbReference type="NCBI Taxonomy" id="550537"/>
    <lineage>
        <taxon>Bacteria</taxon>
        <taxon>Pseudomonadati</taxon>
        <taxon>Pseudomonadota</taxon>
        <taxon>Gammaproteobacteria</taxon>
        <taxon>Enterobacterales</taxon>
        <taxon>Enterobacteriaceae</taxon>
        <taxon>Salmonella</taxon>
    </lineage>
</organism>
<feature type="chain" id="PRO_1000099945" description="Pantothenate kinase">
    <location>
        <begin position="1"/>
        <end position="316"/>
    </location>
</feature>
<feature type="binding site" evidence="1">
    <location>
        <begin position="95"/>
        <end position="102"/>
    </location>
    <ligand>
        <name>ATP</name>
        <dbReference type="ChEBI" id="CHEBI:30616"/>
    </ligand>
</feature>
<accession>B5QXR5</accession>
<protein>
    <recommendedName>
        <fullName evidence="1">Pantothenate kinase</fullName>
        <ecNumber evidence="1">2.7.1.33</ecNumber>
    </recommendedName>
    <alternativeName>
        <fullName evidence="1">Pantothenic acid kinase</fullName>
    </alternativeName>
</protein>
<evidence type="ECO:0000255" key="1">
    <source>
        <dbReference type="HAMAP-Rule" id="MF_00215"/>
    </source>
</evidence>